<proteinExistence type="inferred from homology"/>
<dbReference type="EMBL" id="CP000440">
    <property type="protein sequence ID" value="ABI87605.1"/>
    <property type="molecule type" value="Genomic_DNA"/>
</dbReference>
<dbReference type="RefSeq" id="WP_006752152.1">
    <property type="nucleotide sequence ID" value="NZ_CP009798.1"/>
</dbReference>
<dbReference type="SMR" id="Q0BE18"/>
<dbReference type="GeneID" id="93085752"/>
<dbReference type="KEGG" id="bam:Bamb_2049"/>
<dbReference type="PATRIC" id="fig|339670.21.peg.2894"/>
<dbReference type="eggNOG" id="COG0233">
    <property type="taxonomic scope" value="Bacteria"/>
</dbReference>
<dbReference type="Proteomes" id="UP000000662">
    <property type="component" value="Chromosome 1"/>
</dbReference>
<dbReference type="GO" id="GO:0005829">
    <property type="term" value="C:cytosol"/>
    <property type="evidence" value="ECO:0007669"/>
    <property type="project" value="GOC"/>
</dbReference>
<dbReference type="GO" id="GO:0043023">
    <property type="term" value="F:ribosomal large subunit binding"/>
    <property type="evidence" value="ECO:0007669"/>
    <property type="project" value="TreeGrafter"/>
</dbReference>
<dbReference type="GO" id="GO:0002184">
    <property type="term" value="P:cytoplasmic translational termination"/>
    <property type="evidence" value="ECO:0007669"/>
    <property type="project" value="TreeGrafter"/>
</dbReference>
<dbReference type="CDD" id="cd00520">
    <property type="entry name" value="RRF"/>
    <property type="match status" value="1"/>
</dbReference>
<dbReference type="FunFam" id="1.10.132.20:FF:000001">
    <property type="entry name" value="Ribosome-recycling factor"/>
    <property type="match status" value="1"/>
</dbReference>
<dbReference type="FunFam" id="3.30.1360.40:FF:000001">
    <property type="entry name" value="Ribosome-recycling factor"/>
    <property type="match status" value="1"/>
</dbReference>
<dbReference type="Gene3D" id="3.30.1360.40">
    <property type="match status" value="1"/>
</dbReference>
<dbReference type="Gene3D" id="1.10.132.20">
    <property type="entry name" value="Ribosome-recycling factor"/>
    <property type="match status" value="1"/>
</dbReference>
<dbReference type="HAMAP" id="MF_00040">
    <property type="entry name" value="RRF"/>
    <property type="match status" value="1"/>
</dbReference>
<dbReference type="InterPro" id="IPR002661">
    <property type="entry name" value="Ribosome_recyc_fac"/>
</dbReference>
<dbReference type="InterPro" id="IPR023584">
    <property type="entry name" value="Ribosome_recyc_fac_dom"/>
</dbReference>
<dbReference type="InterPro" id="IPR036191">
    <property type="entry name" value="RRF_sf"/>
</dbReference>
<dbReference type="NCBIfam" id="TIGR00496">
    <property type="entry name" value="frr"/>
    <property type="match status" value="1"/>
</dbReference>
<dbReference type="PANTHER" id="PTHR20982:SF3">
    <property type="entry name" value="MITOCHONDRIAL RIBOSOME RECYCLING FACTOR PSEUDO 1"/>
    <property type="match status" value="1"/>
</dbReference>
<dbReference type="PANTHER" id="PTHR20982">
    <property type="entry name" value="RIBOSOME RECYCLING FACTOR"/>
    <property type="match status" value="1"/>
</dbReference>
<dbReference type="Pfam" id="PF01765">
    <property type="entry name" value="RRF"/>
    <property type="match status" value="1"/>
</dbReference>
<dbReference type="SUPFAM" id="SSF55194">
    <property type="entry name" value="Ribosome recycling factor, RRF"/>
    <property type="match status" value="1"/>
</dbReference>
<evidence type="ECO:0000255" key="1">
    <source>
        <dbReference type="HAMAP-Rule" id="MF_00040"/>
    </source>
</evidence>
<protein>
    <recommendedName>
        <fullName evidence="1">Ribosome-recycling factor</fullName>
        <shortName evidence="1">RRF</shortName>
    </recommendedName>
    <alternativeName>
        <fullName evidence="1">Ribosome-releasing factor</fullName>
    </alternativeName>
</protein>
<sequence length="186" mass="20799">MSVADVKKGVEQKMQRSIEAFKNDLAKIRTGRAHTGLLDHVQVDYYGSMVPISQVANLTLVDARTIGVQPWEKNMVAKVEKAIREADLGLNPATAGDLIRVPMPALTEERRRELTKVVKSEGETAKVAIRNLRRDANEALKKLVKDKEISEDDERRASDDVQKLTDKHVAEVDKLVQSKEAEIMTV</sequence>
<reference key="1">
    <citation type="submission" date="2006-08" db="EMBL/GenBank/DDBJ databases">
        <title>Complete sequence of chromosome 1 of Burkholderia cepacia AMMD.</title>
        <authorList>
            <person name="Copeland A."/>
            <person name="Lucas S."/>
            <person name="Lapidus A."/>
            <person name="Barry K."/>
            <person name="Detter J.C."/>
            <person name="Glavina del Rio T."/>
            <person name="Hammon N."/>
            <person name="Israni S."/>
            <person name="Pitluck S."/>
            <person name="Bruce D."/>
            <person name="Chain P."/>
            <person name="Malfatti S."/>
            <person name="Shin M."/>
            <person name="Vergez L."/>
            <person name="Schmutz J."/>
            <person name="Larimer F."/>
            <person name="Land M."/>
            <person name="Hauser L."/>
            <person name="Kyrpides N."/>
            <person name="Kim E."/>
            <person name="Parke J."/>
            <person name="Coenye T."/>
            <person name="Konstantinidis K."/>
            <person name="Ramette A."/>
            <person name="Tiedje J."/>
            <person name="Richardson P."/>
        </authorList>
    </citation>
    <scope>NUCLEOTIDE SEQUENCE [LARGE SCALE GENOMIC DNA]</scope>
    <source>
        <strain>ATCC BAA-244 / DSM 16087 / CCUG 44356 / LMG 19182 / AMMD</strain>
    </source>
</reference>
<gene>
    <name evidence="1" type="primary">frr</name>
    <name type="ordered locus">Bamb_2049</name>
</gene>
<organism>
    <name type="scientific">Burkholderia ambifaria (strain ATCC BAA-244 / DSM 16087 / CCUG 44356 / LMG 19182 / AMMD)</name>
    <name type="common">Burkholderia cepacia (strain AMMD)</name>
    <dbReference type="NCBI Taxonomy" id="339670"/>
    <lineage>
        <taxon>Bacteria</taxon>
        <taxon>Pseudomonadati</taxon>
        <taxon>Pseudomonadota</taxon>
        <taxon>Betaproteobacteria</taxon>
        <taxon>Burkholderiales</taxon>
        <taxon>Burkholderiaceae</taxon>
        <taxon>Burkholderia</taxon>
        <taxon>Burkholderia cepacia complex</taxon>
    </lineage>
</organism>
<accession>Q0BE18</accession>
<keyword id="KW-0963">Cytoplasm</keyword>
<keyword id="KW-0648">Protein biosynthesis</keyword>
<name>RRF_BURCM</name>
<feature type="chain" id="PRO_1000003117" description="Ribosome-recycling factor">
    <location>
        <begin position="1"/>
        <end position="186"/>
    </location>
</feature>
<comment type="function">
    <text evidence="1">Responsible for the release of ribosomes from messenger RNA at the termination of protein biosynthesis. May increase the efficiency of translation by recycling ribosomes from one round of translation to another.</text>
</comment>
<comment type="subcellular location">
    <subcellularLocation>
        <location evidence="1">Cytoplasm</location>
    </subcellularLocation>
</comment>
<comment type="similarity">
    <text evidence="1">Belongs to the RRF family.</text>
</comment>